<comment type="function">
    <text evidence="1">Involved in protein precursor import into chloroplasts. May be part of an intermediate translocation complex acting as a protein-conducting channel at the inner envelope.</text>
</comment>
<comment type="subunit">
    <text evidence="1">Part of the Tic complex.</text>
</comment>
<comment type="subcellular location">
    <subcellularLocation>
        <location evidence="1">Plastid</location>
        <location evidence="1">Chloroplast inner membrane</location>
        <topology evidence="2">Multi-pass membrane protein</topology>
    </subcellularLocation>
</comment>
<comment type="similarity">
    <text evidence="4">Belongs to the TIC214 family.</text>
</comment>
<protein>
    <recommendedName>
        <fullName evidence="1">Protein TIC 214</fullName>
    </recommendedName>
    <alternativeName>
        <fullName evidence="1">Translocon at the inner envelope membrane of chloroplasts 214</fullName>
        <shortName evidence="1">AtTIC214</shortName>
    </alternativeName>
</protein>
<keyword id="KW-0150">Chloroplast</keyword>
<keyword id="KW-0472">Membrane</keyword>
<keyword id="KW-0934">Plastid</keyword>
<keyword id="KW-1001">Plastid inner membrane</keyword>
<keyword id="KW-0653">Protein transport</keyword>
<keyword id="KW-1185">Reference proteome</keyword>
<keyword id="KW-0812">Transmembrane</keyword>
<keyword id="KW-1133">Transmembrane helix</keyword>
<keyword id="KW-0813">Transport</keyword>
<accession>Q2VEC3</accession>
<dbReference type="EMBL" id="DQ231562">
    <property type="protein sequence ID" value="ABB90095.1"/>
    <property type="molecule type" value="Genomic_DNA"/>
</dbReference>
<dbReference type="EMBL" id="DQ386163">
    <property type="protein sequence ID" value="ABD47115.1"/>
    <property type="molecule type" value="Genomic_DNA"/>
</dbReference>
<dbReference type="STRING" id="4113.Q2VEC3"/>
<dbReference type="PaxDb" id="4113-PGSC0003DMT400010726"/>
<dbReference type="KEGG" id="sot:4099913"/>
<dbReference type="InParanoid" id="Q2VEC3"/>
<dbReference type="OrthoDB" id="1938219at2759"/>
<dbReference type="Proteomes" id="UP000011115">
    <property type="component" value="Unassembled WGS sequence"/>
</dbReference>
<dbReference type="GO" id="GO:0009706">
    <property type="term" value="C:chloroplast inner membrane"/>
    <property type="evidence" value="ECO:0007669"/>
    <property type="project" value="UniProtKB-SubCell"/>
</dbReference>
<dbReference type="GO" id="GO:0015031">
    <property type="term" value="P:protein transport"/>
    <property type="evidence" value="ECO:0007669"/>
    <property type="project" value="UniProtKB-KW"/>
</dbReference>
<dbReference type="InterPro" id="IPR008896">
    <property type="entry name" value="TIC214"/>
</dbReference>
<dbReference type="PANTHER" id="PTHR33163:SF40">
    <property type="entry name" value="PROTEIN TIC 214"/>
    <property type="match status" value="1"/>
</dbReference>
<dbReference type="PANTHER" id="PTHR33163">
    <property type="entry name" value="PROTEIN TIC 214-RELATED"/>
    <property type="match status" value="1"/>
</dbReference>
<dbReference type="Pfam" id="PF05758">
    <property type="entry name" value="Ycf1"/>
    <property type="match status" value="1"/>
</dbReference>
<evidence type="ECO:0000250" key="1">
    <source>
        <dbReference type="UniProtKB" id="P56785"/>
    </source>
</evidence>
<evidence type="ECO:0000255" key="2"/>
<evidence type="ECO:0000256" key="3">
    <source>
        <dbReference type="SAM" id="MobiDB-lite"/>
    </source>
</evidence>
<evidence type="ECO:0000305" key="4"/>
<name>TI214_SOLTU</name>
<reference key="1">
    <citation type="journal article" date="2006" name="Plant Cell Rep.">
        <title>The complete chloroplast genome sequences of Solanum tuberosum and comparative analysis with Solanaceae species identified the presence of a 241-bp deletion in cultivated potato chloroplast DNA sequence.</title>
        <authorList>
            <person name="Chung H.-J."/>
            <person name="Jung J.D."/>
            <person name="Park H.-W."/>
            <person name="Kim J.-H."/>
            <person name="Cha H.W."/>
            <person name="Min S.R."/>
            <person name="Jeong W.-J."/>
            <person name="Liu J.R."/>
        </authorList>
    </citation>
    <scope>NUCLEOTIDE SEQUENCE [LARGE SCALE GENOMIC DNA]</scope>
    <source>
        <strain>cv. Desiree</strain>
    </source>
</reference>
<reference key="2">
    <citation type="submission" date="2006-02" db="EMBL/GenBank/DDBJ databases">
        <title>Complete chloroplast genome sequences of Solanum tuberosum cultivar Desiree and comparative analyses with other Solanaceae genomes.</title>
        <authorList>
            <person name="Gargano D."/>
            <person name="Scotti N."/>
            <person name="Vezzi A."/>
            <person name="Bilardi A."/>
            <person name="Valle G."/>
            <person name="Grillo S."/>
            <person name="Cardi T."/>
        </authorList>
    </citation>
    <scope>NUCLEOTIDE SEQUENCE [LARGE SCALE GENOMIC DNA]</scope>
    <source>
        <strain>cv. Desiree</strain>
    </source>
</reference>
<organism>
    <name type="scientific">Solanum tuberosum</name>
    <name type="common">Potato</name>
    <dbReference type="NCBI Taxonomy" id="4113"/>
    <lineage>
        <taxon>Eukaryota</taxon>
        <taxon>Viridiplantae</taxon>
        <taxon>Streptophyta</taxon>
        <taxon>Embryophyta</taxon>
        <taxon>Tracheophyta</taxon>
        <taxon>Spermatophyta</taxon>
        <taxon>Magnoliopsida</taxon>
        <taxon>eudicotyledons</taxon>
        <taxon>Gunneridae</taxon>
        <taxon>Pentapetalae</taxon>
        <taxon>asterids</taxon>
        <taxon>lamiids</taxon>
        <taxon>Solanales</taxon>
        <taxon>Solanaceae</taxon>
        <taxon>Solanoideae</taxon>
        <taxon>Solaneae</taxon>
        <taxon>Solanum</taxon>
    </lineage>
</organism>
<sequence length="1887" mass="224964">MIFQSFLLGNLVSLCMKIINSVVVVGLYYGFLTTFSIGPSYLFLLRALVMEEGTEKKVSATTGFITGQLMMFISIYYAPLHLALGRPHTITVLALPYLLFHFFWNNHKHFFDYGSTTRNSMRNLSIQCVFLNNLIFQLFNHFILPSSMLARLVNIYLFRCNNKILFVTSGFVGWLIGHILFMKWLGLVLVWIRQNHSIRSNKYIRSNKYLVLELRNSMARIFSILLFITCVYYLGRIPSPILTKKLKEASKTEERVESEEERDVEIETASEMKGTKQEQEGSTEEDPYPSPSLFSEEGWDPDKIDETEEIRVNGKDKIKDKFHSHLTETGYNNINTSNSPIYDYQDSYLNNNNTGNLENLKLQLLDKKNENQDLFWFQKPLVSLLFDYNRWNRPFRYIKNNRFEQAVRTEMSQYFFDTCKSDGKQRISFTYPPSLSTFWKMIKRKIPLLSLQKTLPNELDTQWVSTNKEKSNNLNKEFLNRLEILAKESLSMDILETRTRLCNDDTKKEYVPKMYDPLLNGPYRGTIKKGVSSSIINNTLLENWEKRVRLNRIHTIFLPNMDYQEFEQKAYTIDKKPLSTEIDEFLTLINELGNEPKSSLNLKGLSLFSDQEQRRVNSEKRTKFVKFVFNAIDPNETKSGKKSIGIKEISKKVPRWSHKLITELDQQMGEFQDRASIDHQLRSRKAKRVVIFTDNNATNDPEEEVALISYSQQSDFRRGIIKGSMRAQRRKTFISKLFQANVHSPLFVDRITPLRLFSFDISELIKPIFRNWTGKEGEFKILESREEQTKREEKKEKDKKEDNKRKEQARIAIEEAWDNIPFAQIIRGYMLITQSILRKYILLPSLIIAKNLGRMLFLQLPEWSEDLQEWNREMQIKCTYNGVQLSETEFPKDWLRDGIQIKILFPFCLKPWHISKLYPSRGELMKKQKQKDDFCFLTVWGMEAELPFGSPRKRPSFFEPIFKELEKKIGKLKKKYFLTLKIFKGKTKLFRRVSKETKKWFIKSIGFLKKIKKELSKVNPIVLFRFKEISESNETKKEKDYLISNQIINESFSQIESGNWPNSSLIETKMKDLTDRTSTIKNQIERITKDKKKVTPEIDINPNKTNNIKKLESPKKFFQILQRRNTRVIWKFHYFLKLFIQRLYIDLFLSIINIPRITTQLFLESTNKLIEKFISNNEINQEKITNKKKIHFIFISTIKKSLYNISKKNSHIFCDLSYLSQAYVFYKLSQTQVINLSKFRSVLQYNTTSCFLKTKIKDYFKTLGIFHSELKHKKLQSYRINQWKNWLRWHYQYDLSQIRWSRLMPKKWRTKVNQSCMAKNKNRNLNKWNSYEKDQLIHYKKENDSELYSLSNQKDNFKKCYRYGLLAYKSINYENKSDSFFSRLPFQVKKNLEISYNSNTSKHNFVDMPGNLHINNYLRKVNILDIERNLDRKYFDWKIIHFSLRQKGDIEAWVKIDTNSNPNTKIGINNYQIIDKIEKKGVFYLTTHQNPEKTQKNSKKVFFDWMGMNEKIFNRPILNLEFWFFPEFVLLYNVYKIKPWIIPSKFLLFNLNTNENVIQNKNQKQNFFLPSNKKIKNRSQETKEPPSQRERGSDIENKGNLSPVFSKHQTDLEKDYVESDTKKGQNKKQYKSNTEAELDLFLKRYLLFQLRWNDALNKRMLENIKVYCLLLRLINPTKITISSIQRREMSLDIMLIQANLPLTDLMKKGVLIIEPIRLSVKHNGQFIMYQTIGISLVHKSKHQTNQRYREQRYVDKKNFDEFILQPQTQRINTEKTHFDLLVPENILWSRRRRELRIRSFFNSLNWNVVDRNSVFCNETNVKNWSQFLGERKPLYKDKKKLIKFKFFLWPNYRLEDLACMNRYWFDTNNGSRFSILRIHMYPRLKIN</sequence>
<feature type="chain" id="PRO_0000262631" description="Protein TIC 214">
    <location>
        <begin position="1"/>
        <end position="1887"/>
    </location>
</feature>
<feature type="transmembrane region" description="Helical" evidence="2">
    <location>
        <begin position="18"/>
        <end position="38"/>
    </location>
</feature>
<feature type="transmembrane region" description="Helical" evidence="2">
    <location>
        <begin position="64"/>
        <end position="84"/>
    </location>
</feature>
<feature type="transmembrane region" description="Helical" evidence="2">
    <location>
        <begin position="87"/>
        <end position="107"/>
    </location>
</feature>
<feature type="transmembrane region" description="Helical" evidence="2">
    <location>
        <begin position="124"/>
        <end position="144"/>
    </location>
</feature>
<feature type="transmembrane region" description="Helical" evidence="2">
    <location>
        <begin position="172"/>
        <end position="192"/>
    </location>
</feature>
<feature type="transmembrane region" description="Helical" evidence="2">
    <location>
        <begin position="221"/>
        <end position="241"/>
    </location>
</feature>
<feature type="region of interest" description="Disordered" evidence="3">
    <location>
        <begin position="248"/>
        <end position="300"/>
    </location>
</feature>
<feature type="region of interest" description="Disordered" evidence="3">
    <location>
        <begin position="785"/>
        <end position="805"/>
    </location>
</feature>
<feature type="region of interest" description="Disordered" evidence="3">
    <location>
        <begin position="1569"/>
        <end position="1603"/>
    </location>
</feature>
<feature type="compositionally biased region" description="Acidic residues" evidence="3">
    <location>
        <begin position="256"/>
        <end position="268"/>
    </location>
</feature>
<feature type="compositionally biased region" description="Basic and acidic residues" evidence="3">
    <location>
        <begin position="1578"/>
        <end position="1597"/>
    </location>
</feature>
<proteinExistence type="inferred from homology"/>
<geneLocation type="chloroplast"/>
<gene>
    <name evidence="1" type="primary">TIC214</name>
    <name type="synonym">ycf1-A</name>
</gene>
<gene>
    <name evidence="1" type="primary">TIC214</name>
    <name type="synonym">ycf1-B</name>
</gene>